<proteinExistence type="inferred from homology"/>
<comment type="similarity">
    <text evidence="1">Belongs to the universal ribosomal protein uS2 family.</text>
</comment>
<gene>
    <name evidence="1" type="primary">rpsB</name>
    <name type="ordered locus">PA0519</name>
</gene>
<protein>
    <recommendedName>
        <fullName evidence="1">Small ribosomal subunit protein uS2</fullName>
    </recommendedName>
    <alternativeName>
        <fullName evidence="3">30S ribosomal protein S2</fullName>
    </alternativeName>
</protein>
<sequence length="260" mass="29960">MAVVTMKQLLESGTNFGHSTRKWNPKMKKYIFTSRNGIHIIDIKKTSEKIEEAYQELSKIVNQGGKVLFLGTKKQIQTSIMEESKRCGQYYVNHRWLGGILTNFHTILKRIQLLHDLHKQEEDGVWKKLPKKEVVQLKRKRDKLEKFLGGIKDMKELPQALFVVDLEKEKNAVAEARKLNIKVFSMVDTNCDPDLVDYIIPANDDAIRSVKLITWIIANACIEGSGGVAEKPEQFDAKNVLKPKLPYQPNRRPYQETVKK</sequence>
<name>RS2_PHYAS</name>
<evidence type="ECO:0000255" key="1">
    <source>
        <dbReference type="HAMAP-Rule" id="MF_00291"/>
    </source>
</evidence>
<evidence type="ECO:0000256" key="2">
    <source>
        <dbReference type="SAM" id="MobiDB-lite"/>
    </source>
</evidence>
<evidence type="ECO:0000305" key="3"/>
<keyword id="KW-1185">Reference proteome</keyword>
<keyword id="KW-0687">Ribonucleoprotein</keyword>
<keyword id="KW-0689">Ribosomal protein</keyword>
<dbReference type="EMBL" id="AM422018">
    <property type="protein sequence ID" value="CAM11853.1"/>
    <property type="molecule type" value="Genomic_DNA"/>
</dbReference>
<dbReference type="SMR" id="B1VA80"/>
<dbReference type="STRING" id="59748.PA0519"/>
<dbReference type="KEGG" id="pal:PA0519"/>
<dbReference type="eggNOG" id="COG0052">
    <property type="taxonomic scope" value="Bacteria"/>
</dbReference>
<dbReference type="Proteomes" id="UP000008323">
    <property type="component" value="Chromosome"/>
</dbReference>
<dbReference type="GO" id="GO:0022627">
    <property type="term" value="C:cytosolic small ribosomal subunit"/>
    <property type="evidence" value="ECO:0007669"/>
    <property type="project" value="TreeGrafter"/>
</dbReference>
<dbReference type="GO" id="GO:0003735">
    <property type="term" value="F:structural constituent of ribosome"/>
    <property type="evidence" value="ECO:0007669"/>
    <property type="project" value="InterPro"/>
</dbReference>
<dbReference type="GO" id="GO:0006412">
    <property type="term" value="P:translation"/>
    <property type="evidence" value="ECO:0007669"/>
    <property type="project" value="UniProtKB-UniRule"/>
</dbReference>
<dbReference type="CDD" id="cd01425">
    <property type="entry name" value="RPS2"/>
    <property type="match status" value="1"/>
</dbReference>
<dbReference type="FunFam" id="1.10.287.610:FF:000001">
    <property type="entry name" value="30S ribosomal protein S2"/>
    <property type="match status" value="1"/>
</dbReference>
<dbReference type="Gene3D" id="3.40.50.10490">
    <property type="entry name" value="Glucose-6-phosphate isomerase like protein, domain 1"/>
    <property type="match status" value="1"/>
</dbReference>
<dbReference type="Gene3D" id="1.10.287.610">
    <property type="entry name" value="Helix hairpin bin"/>
    <property type="match status" value="1"/>
</dbReference>
<dbReference type="HAMAP" id="MF_00291_B">
    <property type="entry name" value="Ribosomal_uS2_B"/>
    <property type="match status" value="1"/>
</dbReference>
<dbReference type="InterPro" id="IPR001865">
    <property type="entry name" value="Ribosomal_uS2"/>
</dbReference>
<dbReference type="InterPro" id="IPR005706">
    <property type="entry name" value="Ribosomal_uS2_bac/mit/plastid"/>
</dbReference>
<dbReference type="InterPro" id="IPR023591">
    <property type="entry name" value="Ribosomal_uS2_flav_dom_sf"/>
</dbReference>
<dbReference type="NCBIfam" id="TIGR01011">
    <property type="entry name" value="rpsB_bact"/>
    <property type="match status" value="1"/>
</dbReference>
<dbReference type="PANTHER" id="PTHR12534">
    <property type="entry name" value="30S RIBOSOMAL PROTEIN S2 PROKARYOTIC AND ORGANELLAR"/>
    <property type="match status" value="1"/>
</dbReference>
<dbReference type="PANTHER" id="PTHR12534:SF0">
    <property type="entry name" value="SMALL RIBOSOMAL SUBUNIT PROTEIN US2M"/>
    <property type="match status" value="1"/>
</dbReference>
<dbReference type="Pfam" id="PF00318">
    <property type="entry name" value="Ribosomal_S2"/>
    <property type="match status" value="1"/>
</dbReference>
<dbReference type="PRINTS" id="PR00395">
    <property type="entry name" value="RIBOSOMALS2"/>
</dbReference>
<dbReference type="SUPFAM" id="SSF52313">
    <property type="entry name" value="Ribosomal protein S2"/>
    <property type="match status" value="1"/>
</dbReference>
<accession>B1VA80</accession>
<feature type="chain" id="PRO_1000119430" description="Small ribosomal subunit protein uS2">
    <location>
        <begin position="1"/>
        <end position="260"/>
    </location>
</feature>
<feature type="region of interest" description="Disordered" evidence="2">
    <location>
        <begin position="240"/>
        <end position="260"/>
    </location>
</feature>
<organism>
    <name type="scientific">Phytoplasma australiense</name>
    <dbReference type="NCBI Taxonomy" id="59748"/>
    <lineage>
        <taxon>Bacteria</taxon>
        <taxon>Bacillati</taxon>
        <taxon>Mycoplasmatota</taxon>
        <taxon>Mollicutes</taxon>
        <taxon>Acholeplasmatales</taxon>
        <taxon>Acholeplasmataceae</taxon>
        <taxon>Candidatus Phytoplasma</taxon>
        <taxon>16SrXII (Stolbur group)</taxon>
    </lineage>
</organism>
<reference key="1">
    <citation type="journal article" date="2008" name="J. Bacteriol.">
        <title>Comparative genome analysis of 'Candidatus Phytoplasma australiense' (subgroup tuf-Australia I; rp-A) and 'Ca. Phytoplasma asteris' strains OY-M and AY-WB.</title>
        <authorList>
            <person name="Tran-Nguyen L.T."/>
            <person name="Kube M."/>
            <person name="Schneider B."/>
            <person name="Reinhardt R."/>
            <person name="Gibb K.S."/>
        </authorList>
    </citation>
    <scope>NUCLEOTIDE SEQUENCE [LARGE SCALE GENOMIC DNA]</scope>
</reference>